<protein>
    <recommendedName>
        <fullName evidence="1">Large ribosomal subunit protein uL5</fullName>
    </recommendedName>
    <alternativeName>
        <fullName evidence="2">50S ribosomal protein L5</fullName>
    </alternativeName>
</protein>
<feature type="chain" id="PRO_1000052820" description="Large ribosomal subunit protein uL5">
    <location>
        <begin position="1"/>
        <end position="179"/>
    </location>
</feature>
<name>RL5_SHEB5</name>
<gene>
    <name evidence="1" type="primary">rplE</name>
    <name type="ordered locus">Sbal_4158</name>
</gene>
<reference key="1">
    <citation type="submission" date="2007-02" db="EMBL/GenBank/DDBJ databases">
        <title>Complete sequence of chromosome of Shewanella baltica OS155.</title>
        <authorList>
            <consortium name="US DOE Joint Genome Institute"/>
            <person name="Copeland A."/>
            <person name="Lucas S."/>
            <person name="Lapidus A."/>
            <person name="Barry K."/>
            <person name="Detter J.C."/>
            <person name="Glavina del Rio T."/>
            <person name="Hammon N."/>
            <person name="Israni S."/>
            <person name="Dalin E."/>
            <person name="Tice H."/>
            <person name="Pitluck S."/>
            <person name="Sims D.R."/>
            <person name="Brettin T."/>
            <person name="Bruce D."/>
            <person name="Han C."/>
            <person name="Tapia R."/>
            <person name="Brainard J."/>
            <person name="Schmutz J."/>
            <person name="Larimer F."/>
            <person name="Land M."/>
            <person name="Hauser L."/>
            <person name="Kyrpides N."/>
            <person name="Mikhailova N."/>
            <person name="Brettar I."/>
            <person name="Klappenbach J."/>
            <person name="Konstantinidis K."/>
            <person name="Rodrigues J."/>
            <person name="Tiedje J."/>
            <person name="Richardson P."/>
        </authorList>
    </citation>
    <scope>NUCLEOTIDE SEQUENCE [LARGE SCALE GENOMIC DNA]</scope>
    <source>
        <strain>OS155 / ATCC BAA-1091</strain>
    </source>
</reference>
<proteinExistence type="inferred from homology"/>
<dbReference type="EMBL" id="CP000563">
    <property type="protein sequence ID" value="ABN63623.1"/>
    <property type="molecule type" value="Genomic_DNA"/>
</dbReference>
<dbReference type="RefSeq" id="WP_006083588.1">
    <property type="nucleotide sequence ID" value="NC_009052.1"/>
</dbReference>
<dbReference type="SMR" id="A3DA60"/>
<dbReference type="STRING" id="325240.Sbal_4158"/>
<dbReference type="GeneID" id="11770569"/>
<dbReference type="KEGG" id="sbl:Sbal_4158"/>
<dbReference type="HOGENOM" id="CLU_061015_2_1_6"/>
<dbReference type="OrthoDB" id="9806626at2"/>
<dbReference type="Proteomes" id="UP000001557">
    <property type="component" value="Chromosome"/>
</dbReference>
<dbReference type="GO" id="GO:1990904">
    <property type="term" value="C:ribonucleoprotein complex"/>
    <property type="evidence" value="ECO:0007669"/>
    <property type="project" value="UniProtKB-KW"/>
</dbReference>
<dbReference type="GO" id="GO:0005840">
    <property type="term" value="C:ribosome"/>
    <property type="evidence" value="ECO:0007669"/>
    <property type="project" value="UniProtKB-KW"/>
</dbReference>
<dbReference type="GO" id="GO:0019843">
    <property type="term" value="F:rRNA binding"/>
    <property type="evidence" value="ECO:0007669"/>
    <property type="project" value="UniProtKB-UniRule"/>
</dbReference>
<dbReference type="GO" id="GO:0003735">
    <property type="term" value="F:structural constituent of ribosome"/>
    <property type="evidence" value="ECO:0007669"/>
    <property type="project" value="InterPro"/>
</dbReference>
<dbReference type="GO" id="GO:0000049">
    <property type="term" value="F:tRNA binding"/>
    <property type="evidence" value="ECO:0007669"/>
    <property type="project" value="UniProtKB-UniRule"/>
</dbReference>
<dbReference type="GO" id="GO:0006412">
    <property type="term" value="P:translation"/>
    <property type="evidence" value="ECO:0007669"/>
    <property type="project" value="UniProtKB-UniRule"/>
</dbReference>
<dbReference type="FunFam" id="3.30.1440.10:FF:000001">
    <property type="entry name" value="50S ribosomal protein L5"/>
    <property type="match status" value="1"/>
</dbReference>
<dbReference type="Gene3D" id="3.30.1440.10">
    <property type="match status" value="1"/>
</dbReference>
<dbReference type="HAMAP" id="MF_01333_B">
    <property type="entry name" value="Ribosomal_uL5_B"/>
    <property type="match status" value="1"/>
</dbReference>
<dbReference type="InterPro" id="IPR002132">
    <property type="entry name" value="Ribosomal_uL5"/>
</dbReference>
<dbReference type="InterPro" id="IPR020930">
    <property type="entry name" value="Ribosomal_uL5_bac-type"/>
</dbReference>
<dbReference type="InterPro" id="IPR031309">
    <property type="entry name" value="Ribosomal_uL5_C"/>
</dbReference>
<dbReference type="InterPro" id="IPR020929">
    <property type="entry name" value="Ribosomal_uL5_CS"/>
</dbReference>
<dbReference type="InterPro" id="IPR022803">
    <property type="entry name" value="Ribosomal_uL5_dom_sf"/>
</dbReference>
<dbReference type="InterPro" id="IPR031310">
    <property type="entry name" value="Ribosomal_uL5_N"/>
</dbReference>
<dbReference type="NCBIfam" id="NF000585">
    <property type="entry name" value="PRK00010.1"/>
    <property type="match status" value="1"/>
</dbReference>
<dbReference type="PANTHER" id="PTHR11994">
    <property type="entry name" value="60S RIBOSOMAL PROTEIN L11-RELATED"/>
    <property type="match status" value="1"/>
</dbReference>
<dbReference type="Pfam" id="PF00281">
    <property type="entry name" value="Ribosomal_L5"/>
    <property type="match status" value="1"/>
</dbReference>
<dbReference type="Pfam" id="PF00673">
    <property type="entry name" value="Ribosomal_L5_C"/>
    <property type="match status" value="1"/>
</dbReference>
<dbReference type="PIRSF" id="PIRSF002161">
    <property type="entry name" value="Ribosomal_L5"/>
    <property type="match status" value="1"/>
</dbReference>
<dbReference type="SUPFAM" id="SSF55282">
    <property type="entry name" value="RL5-like"/>
    <property type="match status" value="1"/>
</dbReference>
<dbReference type="PROSITE" id="PS00358">
    <property type="entry name" value="RIBOSOMAL_L5"/>
    <property type="match status" value="1"/>
</dbReference>
<organism>
    <name type="scientific">Shewanella baltica (strain OS155 / ATCC BAA-1091)</name>
    <dbReference type="NCBI Taxonomy" id="325240"/>
    <lineage>
        <taxon>Bacteria</taxon>
        <taxon>Pseudomonadati</taxon>
        <taxon>Pseudomonadota</taxon>
        <taxon>Gammaproteobacteria</taxon>
        <taxon>Alteromonadales</taxon>
        <taxon>Shewanellaceae</taxon>
        <taxon>Shewanella</taxon>
    </lineage>
</organism>
<sequence>MAKLHDKYQETVVAELAKKFGYTSVMQVPRIEKITLNMGVGEAVADKKIMDHAVRDMTAIAGQKPVVTVARKSVAGFKIREGYPIGCKVTLRGERMWEFLERLVDIAIPRIRDFRGLSAKAFDGRGNYAMGVREQIIFPEIDYDKIDKIRGMDIVITTTAKNDEEGRALLDAFNFPFKK</sequence>
<comment type="function">
    <text evidence="1">This is one of the proteins that bind and probably mediate the attachment of the 5S RNA into the large ribosomal subunit, where it forms part of the central protuberance. In the 70S ribosome it contacts protein S13 of the 30S subunit (bridge B1b), connecting the 2 subunits; this bridge is implicated in subunit movement. Contacts the P site tRNA; the 5S rRNA and some of its associated proteins might help stabilize positioning of ribosome-bound tRNAs.</text>
</comment>
<comment type="subunit">
    <text evidence="1">Part of the 50S ribosomal subunit; part of the 5S rRNA/L5/L18/L25 subcomplex. Contacts the 5S rRNA and the P site tRNA. Forms a bridge to the 30S subunit in the 70S ribosome.</text>
</comment>
<comment type="similarity">
    <text evidence="1">Belongs to the universal ribosomal protein uL5 family.</text>
</comment>
<keyword id="KW-1185">Reference proteome</keyword>
<keyword id="KW-0687">Ribonucleoprotein</keyword>
<keyword id="KW-0689">Ribosomal protein</keyword>
<keyword id="KW-0694">RNA-binding</keyword>
<keyword id="KW-0699">rRNA-binding</keyword>
<keyword id="KW-0820">tRNA-binding</keyword>
<accession>A3DA60</accession>
<evidence type="ECO:0000255" key="1">
    <source>
        <dbReference type="HAMAP-Rule" id="MF_01333"/>
    </source>
</evidence>
<evidence type="ECO:0000305" key="2"/>